<dbReference type="EMBL" id="BX571857">
    <property type="protein sequence ID" value="CAG43063.1"/>
    <property type="molecule type" value="Genomic_DNA"/>
</dbReference>
<dbReference type="RefSeq" id="WP_000691284.1">
    <property type="nucleotide sequence ID" value="NC_002953.3"/>
</dbReference>
<dbReference type="SMR" id="Q6G9L3"/>
<dbReference type="KEGG" id="sas:SAS1285"/>
<dbReference type="HOGENOM" id="CLU_038045_0_1_9"/>
<dbReference type="GO" id="GO:0008408">
    <property type="term" value="F:3'-5' exonuclease activity"/>
    <property type="evidence" value="ECO:0007669"/>
    <property type="project" value="InterPro"/>
</dbReference>
<dbReference type="GO" id="GO:0004519">
    <property type="term" value="F:endonuclease activity"/>
    <property type="evidence" value="ECO:0007669"/>
    <property type="project" value="UniProtKB-KW"/>
</dbReference>
<dbReference type="GO" id="GO:0006310">
    <property type="term" value="P:DNA recombination"/>
    <property type="evidence" value="ECO:0007669"/>
    <property type="project" value="UniProtKB-KW"/>
</dbReference>
<dbReference type="GO" id="GO:0006260">
    <property type="term" value="P:DNA replication"/>
    <property type="evidence" value="ECO:0007669"/>
    <property type="project" value="UniProtKB-KW"/>
</dbReference>
<dbReference type="CDD" id="cd00840">
    <property type="entry name" value="MPP_Mre11_N"/>
    <property type="match status" value="1"/>
</dbReference>
<dbReference type="Gene3D" id="3.60.21.10">
    <property type="match status" value="1"/>
</dbReference>
<dbReference type="InterPro" id="IPR004843">
    <property type="entry name" value="Calcineurin-like_PHP_ApaH"/>
</dbReference>
<dbReference type="InterPro" id="IPR050535">
    <property type="entry name" value="DNA_Repair-Maintenance_Comp"/>
</dbReference>
<dbReference type="InterPro" id="IPR029052">
    <property type="entry name" value="Metallo-depent_PP-like"/>
</dbReference>
<dbReference type="InterPro" id="IPR041796">
    <property type="entry name" value="Mre11_N"/>
</dbReference>
<dbReference type="InterPro" id="IPR053381">
    <property type="entry name" value="SbcCD_nuclease"/>
</dbReference>
<dbReference type="InterPro" id="IPR004593">
    <property type="entry name" value="SbcD"/>
</dbReference>
<dbReference type="InterPro" id="IPR026843">
    <property type="entry name" value="SbcD_C"/>
</dbReference>
<dbReference type="NCBIfam" id="TIGR00619">
    <property type="entry name" value="sbcd"/>
    <property type="match status" value="1"/>
</dbReference>
<dbReference type="NCBIfam" id="NF041753">
    <property type="entry name" value="sbcd_Staph"/>
    <property type="match status" value="1"/>
</dbReference>
<dbReference type="PANTHER" id="PTHR30337">
    <property type="entry name" value="COMPONENT OF ATP-DEPENDENT DSDNA EXONUCLEASE"/>
    <property type="match status" value="1"/>
</dbReference>
<dbReference type="PANTHER" id="PTHR30337:SF0">
    <property type="entry name" value="NUCLEASE SBCCD SUBUNIT D"/>
    <property type="match status" value="1"/>
</dbReference>
<dbReference type="Pfam" id="PF00149">
    <property type="entry name" value="Metallophos"/>
    <property type="match status" value="1"/>
</dbReference>
<dbReference type="Pfam" id="PF12320">
    <property type="entry name" value="SbcD_C"/>
    <property type="match status" value="1"/>
</dbReference>
<dbReference type="SUPFAM" id="SSF56300">
    <property type="entry name" value="Metallo-dependent phosphatases"/>
    <property type="match status" value="1"/>
</dbReference>
<feature type="chain" id="PRO_0000338483" description="Nuclease SbcCD subunit D">
    <location>
        <begin position="1"/>
        <end position="373"/>
    </location>
</feature>
<evidence type="ECO:0000250" key="1"/>
<evidence type="ECO:0000305" key="2"/>
<sequence length="373" mass="42936">MKIIHTADWHLGKILNGKQLLEDQAYILDMFVEKMKEEEPDIIVIAGDLYDTTYPSKDAIMLLEQAIGKLNLELRIPIIIISGNHDGKERLNYGASWFEHNQLFIRTDFTSINSPIEINGVNFYTLPYATVSEMKHYFEDDTIETHQQGITRCIETIAPEIDEDAVNILISHLTVQGGKTSDSERPLTIGTVESVQKGVFDIFDYVMLGHLHHPFSIEDDKIKYSGSLLQYSFSEAGQAKGYRRVTINDGIINDVFIPLKPLRQLEIISGEYNDVINEKVHVKNKDNYLHFKLKNMSHITDPMMSLKQIYPNTLALTNETFNYNEENNAIEISEKDDMSIIEMFYKHITDKELSDIQSKKIKNILENELRKED</sequence>
<comment type="function">
    <text evidence="1">SbcCD cleaves DNA hairpin structures. These structures can inhibit DNA replication and are intermediates in certain DNA recombination reactions. The complex acts as a 3'-&gt;5' double strand exonuclease that can open hairpins. It also has a 5' single-strand endonuclease activity (By similarity).</text>
</comment>
<comment type="subunit">
    <text evidence="1">Heterodimer of SbcC and SbcD.</text>
</comment>
<comment type="similarity">
    <text evidence="2">Belongs to the SbcD family.</text>
</comment>
<keyword id="KW-0233">DNA recombination</keyword>
<keyword id="KW-0235">DNA replication</keyword>
<keyword id="KW-0255">Endonuclease</keyword>
<keyword id="KW-0269">Exonuclease</keyword>
<keyword id="KW-0378">Hydrolase</keyword>
<keyword id="KW-0540">Nuclease</keyword>
<organism>
    <name type="scientific">Staphylococcus aureus (strain MSSA476)</name>
    <dbReference type="NCBI Taxonomy" id="282459"/>
    <lineage>
        <taxon>Bacteria</taxon>
        <taxon>Bacillati</taxon>
        <taxon>Bacillota</taxon>
        <taxon>Bacilli</taxon>
        <taxon>Bacillales</taxon>
        <taxon>Staphylococcaceae</taxon>
        <taxon>Staphylococcus</taxon>
    </lineage>
</organism>
<reference key="1">
    <citation type="journal article" date="2004" name="Proc. Natl. Acad. Sci. U.S.A.">
        <title>Complete genomes of two clinical Staphylococcus aureus strains: evidence for the rapid evolution of virulence and drug resistance.</title>
        <authorList>
            <person name="Holden M.T.G."/>
            <person name="Feil E.J."/>
            <person name="Lindsay J.A."/>
            <person name="Peacock S.J."/>
            <person name="Day N.P.J."/>
            <person name="Enright M.C."/>
            <person name="Foster T.J."/>
            <person name="Moore C.E."/>
            <person name="Hurst L."/>
            <person name="Atkin R."/>
            <person name="Barron A."/>
            <person name="Bason N."/>
            <person name="Bentley S.D."/>
            <person name="Chillingworth C."/>
            <person name="Chillingworth T."/>
            <person name="Churcher C."/>
            <person name="Clark L."/>
            <person name="Corton C."/>
            <person name="Cronin A."/>
            <person name="Doggett J."/>
            <person name="Dowd L."/>
            <person name="Feltwell T."/>
            <person name="Hance Z."/>
            <person name="Harris B."/>
            <person name="Hauser H."/>
            <person name="Holroyd S."/>
            <person name="Jagels K."/>
            <person name="James K.D."/>
            <person name="Lennard N."/>
            <person name="Line A."/>
            <person name="Mayes R."/>
            <person name="Moule S."/>
            <person name="Mungall K."/>
            <person name="Ormond D."/>
            <person name="Quail M.A."/>
            <person name="Rabbinowitsch E."/>
            <person name="Rutherford K.M."/>
            <person name="Sanders M."/>
            <person name="Sharp S."/>
            <person name="Simmonds M."/>
            <person name="Stevens K."/>
            <person name="Whitehead S."/>
            <person name="Barrell B.G."/>
            <person name="Spratt B.G."/>
            <person name="Parkhill J."/>
        </authorList>
    </citation>
    <scope>NUCLEOTIDE SEQUENCE [LARGE SCALE GENOMIC DNA]</scope>
    <source>
        <strain>MSSA476</strain>
    </source>
</reference>
<proteinExistence type="inferred from homology"/>
<accession>Q6G9L3</accession>
<gene>
    <name type="primary">sbcD</name>
    <name type="ordered locus">SAS1285</name>
</gene>
<protein>
    <recommendedName>
        <fullName>Nuclease SbcCD subunit D</fullName>
    </recommendedName>
</protein>
<name>SBCD_STAAS</name>